<dbReference type="EC" id="2.7.7.6" evidence="1"/>
<dbReference type="EMBL" id="AP008937">
    <property type="protein sequence ID" value="BAG27590.1"/>
    <property type="molecule type" value="Genomic_DNA"/>
</dbReference>
<dbReference type="RefSeq" id="WP_003686267.1">
    <property type="nucleotide sequence ID" value="NC_010610.1"/>
</dbReference>
<dbReference type="SMR" id="B2GD58"/>
<dbReference type="GeneID" id="83714298"/>
<dbReference type="KEGG" id="lfe:LAF_1254"/>
<dbReference type="eggNOG" id="COG1758">
    <property type="taxonomic scope" value="Bacteria"/>
</dbReference>
<dbReference type="HOGENOM" id="CLU_125406_6_0_9"/>
<dbReference type="Proteomes" id="UP000001697">
    <property type="component" value="Chromosome"/>
</dbReference>
<dbReference type="GO" id="GO:0000428">
    <property type="term" value="C:DNA-directed RNA polymerase complex"/>
    <property type="evidence" value="ECO:0007669"/>
    <property type="project" value="UniProtKB-KW"/>
</dbReference>
<dbReference type="GO" id="GO:0003677">
    <property type="term" value="F:DNA binding"/>
    <property type="evidence" value="ECO:0007669"/>
    <property type="project" value="UniProtKB-UniRule"/>
</dbReference>
<dbReference type="GO" id="GO:0003899">
    <property type="term" value="F:DNA-directed RNA polymerase activity"/>
    <property type="evidence" value="ECO:0007669"/>
    <property type="project" value="UniProtKB-UniRule"/>
</dbReference>
<dbReference type="GO" id="GO:0006351">
    <property type="term" value="P:DNA-templated transcription"/>
    <property type="evidence" value="ECO:0007669"/>
    <property type="project" value="UniProtKB-UniRule"/>
</dbReference>
<dbReference type="Gene3D" id="3.90.940.10">
    <property type="match status" value="1"/>
</dbReference>
<dbReference type="HAMAP" id="MF_00366">
    <property type="entry name" value="RNApol_bact_RpoZ"/>
    <property type="match status" value="1"/>
</dbReference>
<dbReference type="InterPro" id="IPR003716">
    <property type="entry name" value="DNA-dir_RNA_pol_omega"/>
</dbReference>
<dbReference type="InterPro" id="IPR006110">
    <property type="entry name" value="Pol_omega/Rpo6/RPB6"/>
</dbReference>
<dbReference type="InterPro" id="IPR036161">
    <property type="entry name" value="RPB6/omega-like_sf"/>
</dbReference>
<dbReference type="NCBIfam" id="TIGR00690">
    <property type="entry name" value="rpoZ"/>
    <property type="match status" value="1"/>
</dbReference>
<dbReference type="PANTHER" id="PTHR34476">
    <property type="entry name" value="DNA-DIRECTED RNA POLYMERASE SUBUNIT OMEGA"/>
    <property type="match status" value="1"/>
</dbReference>
<dbReference type="PANTHER" id="PTHR34476:SF1">
    <property type="entry name" value="DNA-DIRECTED RNA POLYMERASE SUBUNIT OMEGA"/>
    <property type="match status" value="1"/>
</dbReference>
<dbReference type="Pfam" id="PF01192">
    <property type="entry name" value="RNA_pol_Rpb6"/>
    <property type="match status" value="1"/>
</dbReference>
<dbReference type="SMART" id="SM01409">
    <property type="entry name" value="RNA_pol_Rpb6"/>
    <property type="match status" value="1"/>
</dbReference>
<dbReference type="SUPFAM" id="SSF63562">
    <property type="entry name" value="RPB6/omega subunit-like"/>
    <property type="match status" value="1"/>
</dbReference>
<proteinExistence type="inferred from homology"/>
<comment type="function">
    <text evidence="1">Promotes RNA polymerase assembly. Latches the N- and C-terminal regions of the beta' subunit thereby facilitating its interaction with the beta and alpha subunits.</text>
</comment>
<comment type="catalytic activity">
    <reaction evidence="1">
        <text>RNA(n) + a ribonucleoside 5'-triphosphate = RNA(n+1) + diphosphate</text>
        <dbReference type="Rhea" id="RHEA:21248"/>
        <dbReference type="Rhea" id="RHEA-COMP:14527"/>
        <dbReference type="Rhea" id="RHEA-COMP:17342"/>
        <dbReference type="ChEBI" id="CHEBI:33019"/>
        <dbReference type="ChEBI" id="CHEBI:61557"/>
        <dbReference type="ChEBI" id="CHEBI:140395"/>
        <dbReference type="EC" id="2.7.7.6"/>
    </reaction>
</comment>
<comment type="subunit">
    <text evidence="1">The RNAP catalytic core consists of 2 alpha, 1 beta, 1 beta' and 1 omega subunit. When a sigma factor is associated with the core the holoenzyme is formed, which can initiate transcription.</text>
</comment>
<comment type="similarity">
    <text evidence="1">Belongs to the RNA polymerase subunit omega family.</text>
</comment>
<sequence length="94" mass="10704">MILFPSVDKLLERVDSRYSLIMLASKRAHEIDKYRIDKWRAAHPDKAGETVSLEGDKPLLLDHYDSNKSVGMALEEIEAGLVTIDPDQHEDLQD</sequence>
<evidence type="ECO:0000255" key="1">
    <source>
        <dbReference type="HAMAP-Rule" id="MF_00366"/>
    </source>
</evidence>
<organism>
    <name type="scientific">Limosilactobacillus fermentum (strain NBRC 3956 / LMG 18251)</name>
    <name type="common">Lactobacillus fermentum</name>
    <dbReference type="NCBI Taxonomy" id="334390"/>
    <lineage>
        <taxon>Bacteria</taxon>
        <taxon>Bacillati</taxon>
        <taxon>Bacillota</taxon>
        <taxon>Bacilli</taxon>
        <taxon>Lactobacillales</taxon>
        <taxon>Lactobacillaceae</taxon>
        <taxon>Limosilactobacillus</taxon>
    </lineage>
</organism>
<name>RPOZ_LIMF3</name>
<keyword id="KW-0240">DNA-directed RNA polymerase</keyword>
<keyword id="KW-0548">Nucleotidyltransferase</keyword>
<keyword id="KW-1185">Reference proteome</keyword>
<keyword id="KW-0804">Transcription</keyword>
<keyword id="KW-0808">Transferase</keyword>
<feature type="chain" id="PRO_1000121238" description="DNA-directed RNA polymerase subunit omega">
    <location>
        <begin position="1"/>
        <end position="94"/>
    </location>
</feature>
<protein>
    <recommendedName>
        <fullName evidence="1">DNA-directed RNA polymerase subunit omega</fullName>
        <shortName evidence="1">RNAP omega subunit</shortName>
        <ecNumber evidence="1">2.7.7.6</ecNumber>
    </recommendedName>
    <alternativeName>
        <fullName evidence="1">RNA polymerase omega subunit</fullName>
    </alternativeName>
    <alternativeName>
        <fullName evidence="1">Transcriptase subunit omega</fullName>
    </alternativeName>
</protein>
<accession>B2GD58</accession>
<gene>
    <name evidence="1" type="primary">rpoZ</name>
    <name type="ordered locus">LAF_1254</name>
</gene>
<reference key="1">
    <citation type="journal article" date="2008" name="DNA Res.">
        <title>Comparative genome analysis of Lactobacillus reuteri and Lactobacillus fermentum reveal a genomic island for reuterin and cobalamin production.</title>
        <authorList>
            <person name="Morita H."/>
            <person name="Toh H."/>
            <person name="Fukuda S."/>
            <person name="Horikawa H."/>
            <person name="Oshima K."/>
            <person name="Suzuki T."/>
            <person name="Murakami M."/>
            <person name="Hisamatsu S."/>
            <person name="Kato Y."/>
            <person name="Takizawa T."/>
            <person name="Fukuoka H."/>
            <person name="Yoshimura T."/>
            <person name="Itoh K."/>
            <person name="O'Sullivan D.J."/>
            <person name="McKay L.L."/>
            <person name="Ohno H."/>
            <person name="Kikuchi J."/>
            <person name="Masaoka T."/>
            <person name="Hattori M."/>
        </authorList>
    </citation>
    <scope>NUCLEOTIDE SEQUENCE [LARGE SCALE GENOMIC DNA]</scope>
    <source>
        <strain>NBRC 3956 / LMG 18251</strain>
    </source>
</reference>